<organism>
    <name type="scientific">Tolumonas auensis (strain DSM 9187 / NBRC 110442 / TA 4)</name>
    <dbReference type="NCBI Taxonomy" id="595494"/>
    <lineage>
        <taxon>Bacteria</taxon>
        <taxon>Pseudomonadati</taxon>
        <taxon>Pseudomonadota</taxon>
        <taxon>Gammaproteobacteria</taxon>
        <taxon>Aeromonadales</taxon>
        <taxon>Aeromonadaceae</taxon>
        <taxon>Tolumonas</taxon>
    </lineage>
</organism>
<reference key="1">
    <citation type="submission" date="2009-05" db="EMBL/GenBank/DDBJ databases">
        <title>Complete sequence of Tolumonas auensis DSM 9187.</title>
        <authorList>
            <consortium name="US DOE Joint Genome Institute"/>
            <person name="Lucas S."/>
            <person name="Copeland A."/>
            <person name="Lapidus A."/>
            <person name="Glavina del Rio T."/>
            <person name="Tice H."/>
            <person name="Bruce D."/>
            <person name="Goodwin L."/>
            <person name="Pitluck S."/>
            <person name="Chertkov O."/>
            <person name="Brettin T."/>
            <person name="Detter J.C."/>
            <person name="Han C."/>
            <person name="Larimer F."/>
            <person name="Land M."/>
            <person name="Hauser L."/>
            <person name="Kyrpides N."/>
            <person name="Mikhailova N."/>
            <person name="Spring S."/>
            <person name="Beller H."/>
        </authorList>
    </citation>
    <scope>NUCLEOTIDE SEQUENCE [LARGE SCALE GENOMIC DNA]</scope>
    <source>
        <strain>DSM 9187 / NBRC 110442 / TA 4</strain>
    </source>
</reference>
<sequence length="369" mass="40986">MTNNSQIKVIVGMSGGVDSSVSAYLLQQQGYQVEGLFMKNWEEDDSDEYCSAATDLADAQAVCDKLGIKLHTVNFAAEYWDNVFELFLAEYKAGRTPNPDILCNKEIKFKAFLEFAAEDLGADYIATGHYVRRDDSTGHPRLLRGLDNNKDQSYFLYTLSSEQIAQSLFPVGDLEKPQVRAIAEQLGLATAKKKDSTGICFIGERKFTEFLGRYLPAQPGVIETVDGKVIGEHQGLMYHTLGQRKGLGIGGLKDGDENPWYVVDKDVARNVLIVAQGHDHPRLFSDGLIAKQLDWVDRQVRREPFDCVVKTRYRQQDIPCHVEPLDDDTIKVTFASPQAAVTPGQSAVFYLGEECLGGGIIEQRFSGSV</sequence>
<protein>
    <recommendedName>
        <fullName evidence="1">tRNA-specific 2-thiouridylase MnmA</fullName>
        <ecNumber evidence="1">2.8.1.13</ecNumber>
    </recommendedName>
</protein>
<accession>C4L952</accession>
<comment type="function">
    <text evidence="1">Catalyzes the 2-thiolation of uridine at the wobble position (U34) of tRNA, leading to the formation of s(2)U34.</text>
</comment>
<comment type="catalytic activity">
    <reaction evidence="1">
        <text>S-sulfanyl-L-cysteinyl-[protein] + uridine(34) in tRNA + AH2 + ATP = 2-thiouridine(34) in tRNA + L-cysteinyl-[protein] + A + AMP + diphosphate + H(+)</text>
        <dbReference type="Rhea" id="RHEA:47032"/>
        <dbReference type="Rhea" id="RHEA-COMP:10131"/>
        <dbReference type="Rhea" id="RHEA-COMP:11726"/>
        <dbReference type="Rhea" id="RHEA-COMP:11727"/>
        <dbReference type="Rhea" id="RHEA-COMP:11728"/>
        <dbReference type="ChEBI" id="CHEBI:13193"/>
        <dbReference type="ChEBI" id="CHEBI:15378"/>
        <dbReference type="ChEBI" id="CHEBI:17499"/>
        <dbReference type="ChEBI" id="CHEBI:29950"/>
        <dbReference type="ChEBI" id="CHEBI:30616"/>
        <dbReference type="ChEBI" id="CHEBI:33019"/>
        <dbReference type="ChEBI" id="CHEBI:61963"/>
        <dbReference type="ChEBI" id="CHEBI:65315"/>
        <dbReference type="ChEBI" id="CHEBI:87170"/>
        <dbReference type="ChEBI" id="CHEBI:456215"/>
        <dbReference type="EC" id="2.8.1.13"/>
    </reaction>
</comment>
<comment type="subcellular location">
    <subcellularLocation>
        <location evidence="1">Cytoplasm</location>
    </subcellularLocation>
</comment>
<comment type="similarity">
    <text evidence="1">Belongs to the MnmA/TRMU family.</text>
</comment>
<evidence type="ECO:0000255" key="1">
    <source>
        <dbReference type="HAMAP-Rule" id="MF_00144"/>
    </source>
</evidence>
<name>MNMA_TOLAT</name>
<gene>
    <name evidence="1" type="primary">mnmA</name>
    <name type="ordered locus">Tola_2325</name>
</gene>
<proteinExistence type="inferred from homology"/>
<dbReference type="EC" id="2.8.1.13" evidence="1"/>
<dbReference type="EMBL" id="CP001616">
    <property type="protein sequence ID" value="ACQ93922.1"/>
    <property type="molecule type" value="Genomic_DNA"/>
</dbReference>
<dbReference type="RefSeq" id="WP_015879390.1">
    <property type="nucleotide sequence ID" value="NC_012691.1"/>
</dbReference>
<dbReference type="SMR" id="C4L952"/>
<dbReference type="STRING" id="595494.Tola_2325"/>
<dbReference type="KEGG" id="tau:Tola_2325"/>
<dbReference type="eggNOG" id="COG0482">
    <property type="taxonomic scope" value="Bacteria"/>
</dbReference>
<dbReference type="HOGENOM" id="CLU_035188_1_0_6"/>
<dbReference type="OrthoDB" id="9800696at2"/>
<dbReference type="Proteomes" id="UP000009073">
    <property type="component" value="Chromosome"/>
</dbReference>
<dbReference type="GO" id="GO:0005737">
    <property type="term" value="C:cytoplasm"/>
    <property type="evidence" value="ECO:0007669"/>
    <property type="project" value="UniProtKB-SubCell"/>
</dbReference>
<dbReference type="GO" id="GO:0005524">
    <property type="term" value="F:ATP binding"/>
    <property type="evidence" value="ECO:0007669"/>
    <property type="project" value="UniProtKB-KW"/>
</dbReference>
<dbReference type="GO" id="GO:0000049">
    <property type="term" value="F:tRNA binding"/>
    <property type="evidence" value="ECO:0007669"/>
    <property type="project" value="UniProtKB-KW"/>
</dbReference>
<dbReference type="GO" id="GO:0103016">
    <property type="term" value="F:tRNA-uridine 2-sulfurtransferase activity"/>
    <property type="evidence" value="ECO:0007669"/>
    <property type="project" value="UniProtKB-EC"/>
</dbReference>
<dbReference type="GO" id="GO:0002143">
    <property type="term" value="P:tRNA wobble position uridine thiolation"/>
    <property type="evidence" value="ECO:0007669"/>
    <property type="project" value="TreeGrafter"/>
</dbReference>
<dbReference type="CDD" id="cd01998">
    <property type="entry name" value="MnmA_TRMU-like"/>
    <property type="match status" value="1"/>
</dbReference>
<dbReference type="FunFam" id="2.30.30.280:FF:000001">
    <property type="entry name" value="tRNA-specific 2-thiouridylase MnmA"/>
    <property type="match status" value="1"/>
</dbReference>
<dbReference type="FunFam" id="2.40.30.10:FF:000023">
    <property type="entry name" value="tRNA-specific 2-thiouridylase MnmA"/>
    <property type="match status" value="1"/>
</dbReference>
<dbReference type="FunFam" id="3.40.50.620:FF:000004">
    <property type="entry name" value="tRNA-specific 2-thiouridylase MnmA"/>
    <property type="match status" value="1"/>
</dbReference>
<dbReference type="Gene3D" id="2.30.30.280">
    <property type="entry name" value="Adenine nucleotide alpha hydrolases-like domains"/>
    <property type="match status" value="1"/>
</dbReference>
<dbReference type="Gene3D" id="3.40.50.620">
    <property type="entry name" value="HUPs"/>
    <property type="match status" value="1"/>
</dbReference>
<dbReference type="Gene3D" id="2.40.30.10">
    <property type="entry name" value="Translation factors"/>
    <property type="match status" value="1"/>
</dbReference>
<dbReference type="HAMAP" id="MF_00144">
    <property type="entry name" value="tRNA_thiouridyl_MnmA"/>
    <property type="match status" value="1"/>
</dbReference>
<dbReference type="InterPro" id="IPR004506">
    <property type="entry name" value="MnmA-like"/>
</dbReference>
<dbReference type="InterPro" id="IPR046885">
    <property type="entry name" value="MnmA-like_C"/>
</dbReference>
<dbReference type="InterPro" id="IPR046884">
    <property type="entry name" value="MnmA-like_central"/>
</dbReference>
<dbReference type="InterPro" id="IPR023382">
    <property type="entry name" value="MnmA-like_central_sf"/>
</dbReference>
<dbReference type="InterPro" id="IPR014729">
    <property type="entry name" value="Rossmann-like_a/b/a_fold"/>
</dbReference>
<dbReference type="NCBIfam" id="NF001138">
    <property type="entry name" value="PRK00143.1"/>
    <property type="match status" value="1"/>
</dbReference>
<dbReference type="NCBIfam" id="TIGR00420">
    <property type="entry name" value="trmU"/>
    <property type="match status" value="1"/>
</dbReference>
<dbReference type="PANTHER" id="PTHR11933:SF5">
    <property type="entry name" value="MITOCHONDRIAL TRNA-SPECIFIC 2-THIOURIDYLASE 1"/>
    <property type="match status" value="1"/>
</dbReference>
<dbReference type="PANTHER" id="PTHR11933">
    <property type="entry name" value="TRNA 5-METHYLAMINOMETHYL-2-THIOURIDYLATE -METHYLTRANSFERASE"/>
    <property type="match status" value="1"/>
</dbReference>
<dbReference type="Pfam" id="PF03054">
    <property type="entry name" value="tRNA_Me_trans"/>
    <property type="match status" value="1"/>
</dbReference>
<dbReference type="Pfam" id="PF20258">
    <property type="entry name" value="tRNA_Me_trans_C"/>
    <property type="match status" value="1"/>
</dbReference>
<dbReference type="Pfam" id="PF20259">
    <property type="entry name" value="tRNA_Me_trans_M"/>
    <property type="match status" value="1"/>
</dbReference>
<dbReference type="SUPFAM" id="SSF52402">
    <property type="entry name" value="Adenine nucleotide alpha hydrolases-like"/>
    <property type="match status" value="1"/>
</dbReference>
<keyword id="KW-0067">ATP-binding</keyword>
<keyword id="KW-0963">Cytoplasm</keyword>
<keyword id="KW-1015">Disulfide bond</keyword>
<keyword id="KW-0547">Nucleotide-binding</keyword>
<keyword id="KW-1185">Reference proteome</keyword>
<keyword id="KW-0694">RNA-binding</keyword>
<keyword id="KW-0808">Transferase</keyword>
<keyword id="KW-0819">tRNA processing</keyword>
<keyword id="KW-0820">tRNA-binding</keyword>
<feature type="chain" id="PRO_1000203316" description="tRNA-specific 2-thiouridylase MnmA">
    <location>
        <begin position="1"/>
        <end position="369"/>
    </location>
</feature>
<feature type="region of interest" description="Interaction with target base in tRNA" evidence="1">
    <location>
        <begin position="98"/>
        <end position="100"/>
    </location>
</feature>
<feature type="region of interest" description="Interaction with tRNA" evidence="1">
    <location>
        <begin position="150"/>
        <end position="152"/>
    </location>
</feature>
<feature type="region of interest" description="Interaction with tRNA" evidence="1">
    <location>
        <begin position="312"/>
        <end position="313"/>
    </location>
</feature>
<feature type="active site" description="Nucleophile" evidence="1">
    <location>
        <position position="103"/>
    </location>
</feature>
<feature type="active site" description="Cysteine persulfide intermediate" evidence="1">
    <location>
        <position position="200"/>
    </location>
</feature>
<feature type="binding site" evidence="1">
    <location>
        <begin position="12"/>
        <end position="19"/>
    </location>
    <ligand>
        <name>ATP</name>
        <dbReference type="ChEBI" id="CHEBI:30616"/>
    </ligand>
</feature>
<feature type="binding site" evidence="1">
    <location>
        <position position="38"/>
    </location>
    <ligand>
        <name>ATP</name>
        <dbReference type="ChEBI" id="CHEBI:30616"/>
    </ligand>
</feature>
<feature type="binding site" evidence="1">
    <location>
        <position position="128"/>
    </location>
    <ligand>
        <name>ATP</name>
        <dbReference type="ChEBI" id="CHEBI:30616"/>
    </ligand>
</feature>
<feature type="site" description="Interaction with tRNA" evidence="1">
    <location>
        <position position="129"/>
    </location>
</feature>
<feature type="site" description="Interaction with tRNA" evidence="1">
    <location>
        <position position="345"/>
    </location>
</feature>
<feature type="disulfide bond" description="Alternate" evidence="1">
    <location>
        <begin position="103"/>
        <end position="200"/>
    </location>
</feature>